<name>RNC_HALH5</name>
<organism>
    <name type="scientific">Halalkalibacterium halodurans (strain ATCC BAA-125 / DSM 18197 / FERM 7344 / JCM 9153 / C-125)</name>
    <name type="common">Bacillus halodurans</name>
    <dbReference type="NCBI Taxonomy" id="272558"/>
    <lineage>
        <taxon>Bacteria</taxon>
        <taxon>Bacillati</taxon>
        <taxon>Bacillota</taxon>
        <taxon>Bacilli</taxon>
        <taxon>Bacillales</taxon>
        <taxon>Bacillaceae</taxon>
        <taxon>Halalkalibacterium (ex Joshi et al. 2022)</taxon>
    </lineage>
</organism>
<dbReference type="EC" id="3.1.26.3" evidence="1"/>
<dbReference type="EMBL" id="BA000004">
    <property type="protein sequence ID" value="BAB06208.1"/>
    <property type="molecule type" value="Genomic_DNA"/>
</dbReference>
<dbReference type="PIR" id="A83961">
    <property type="entry name" value="A83961"/>
</dbReference>
<dbReference type="SMR" id="Q9KA05"/>
<dbReference type="STRING" id="272558.gene:10728387"/>
<dbReference type="KEGG" id="bha:BH2489"/>
<dbReference type="eggNOG" id="COG0571">
    <property type="taxonomic scope" value="Bacteria"/>
</dbReference>
<dbReference type="HOGENOM" id="CLU_000907_1_3_9"/>
<dbReference type="OrthoDB" id="9805026at2"/>
<dbReference type="Proteomes" id="UP000001258">
    <property type="component" value="Chromosome"/>
</dbReference>
<dbReference type="GO" id="GO:0005737">
    <property type="term" value="C:cytoplasm"/>
    <property type="evidence" value="ECO:0007669"/>
    <property type="project" value="UniProtKB-SubCell"/>
</dbReference>
<dbReference type="GO" id="GO:0003725">
    <property type="term" value="F:double-stranded RNA binding"/>
    <property type="evidence" value="ECO:0007669"/>
    <property type="project" value="TreeGrafter"/>
</dbReference>
<dbReference type="GO" id="GO:0046872">
    <property type="term" value="F:metal ion binding"/>
    <property type="evidence" value="ECO:0007669"/>
    <property type="project" value="UniProtKB-KW"/>
</dbReference>
<dbReference type="GO" id="GO:0004525">
    <property type="term" value="F:ribonuclease III activity"/>
    <property type="evidence" value="ECO:0007669"/>
    <property type="project" value="UniProtKB-UniRule"/>
</dbReference>
<dbReference type="GO" id="GO:0019843">
    <property type="term" value="F:rRNA binding"/>
    <property type="evidence" value="ECO:0007669"/>
    <property type="project" value="UniProtKB-KW"/>
</dbReference>
<dbReference type="GO" id="GO:0006397">
    <property type="term" value="P:mRNA processing"/>
    <property type="evidence" value="ECO:0007669"/>
    <property type="project" value="UniProtKB-UniRule"/>
</dbReference>
<dbReference type="GO" id="GO:0010468">
    <property type="term" value="P:regulation of gene expression"/>
    <property type="evidence" value="ECO:0007669"/>
    <property type="project" value="TreeGrafter"/>
</dbReference>
<dbReference type="GO" id="GO:0006364">
    <property type="term" value="P:rRNA processing"/>
    <property type="evidence" value="ECO:0007669"/>
    <property type="project" value="UniProtKB-UniRule"/>
</dbReference>
<dbReference type="GO" id="GO:0008033">
    <property type="term" value="P:tRNA processing"/>
    <property type="evidence" value="ECO:0007669"/>
    <property type="project" value="UniProtKB-KW"/>
</dbReference>
<dbReference type="CDD" id="cd10845">
    <property type="entry name" value="DSRM_RNAse_III_family"/>
    <property type="match status" value="1"/>
</dbReference>
<dbReference type="CDD" id="cd00593">
    <property type="entry name" value="RIBOc"/>
    <property type="match status" value="1"/>
</dbReference>
<dbReference type="FunFam" id="1.10.1520.10:FF:000001">
    <property type="entry name" value="Ribonuclease 3"/>
    <property type="match status" value="1"/>
</dbReference>
<dbReference type="FunFam" id="3.30.160.20:FF:000003">
    <property type="entry name" value="Ribonuclease 3"/>
    <property type="match status" value="1"/>
</dbReference>
<dbReference type="Gene3D" id="3.30.160.20">
    <property type="match status" value="1"/>
</dbReference>
<dbReference type="Gene3D" id="1.10.1520.10">
    <property type="entry name" value="Ribonuclease III domain"/>
    <property type="match status" value="1"/>
</dbReference>
<dbReference type="HAMAP" id="MF_00104">
    <property type="entry name" value="RNase_III"/>
    <property type="match status" value="1"/>
</dbReference>
<dbReference type="InterPro" id="IPR014720">
    <property type="entry name" value="dsRBD_dom"/>
</dbReference>
<dbReference type="InterPro" id="IPR011907">
    <property type="entry name" value="RNase_III"/>
</dbReference>
<dbReference type="InterPro" id="IPR000999">
    <property type="entry name" value="RNase_III_dom"/>
</dbReference>
<dbReference type="InterPro" id="IPR036389">
    <property type="entry name" value="RNase_III_sf"/>
</dbReference>
<dbReference type="NCBIfam" id="TIGR02191">
    <property type="entry name" value="RNaseIII"/>
    <property type="match status" value="1"/>
</dbReference>
<dbReference type="PANTHER" id="PTHR11207:SF0">
    <property type="entry name" value="RIBONUCLEASE 3"/>
    <property type="match status" value="1"/>
</dbReference>
<dbReference type="PANTHER" id="PTHR11207">
    <property type="entry name" value="RIBONUCLEASE III"/>
    <property type="match status" value="1"/>
</dbReference>
<dbReference type="Pfam" id="PF00035">
    <property type="entry name" value="dsrm"/>
    <property type="match status" value="1"/>
</dbReference>
<dbReference type="Pfam" id="PF14622">
    <property type="entry name" value="Ribonucleas_3_3"/>
    <property type="match status" value="1"/>
</dbReference>
<dbReference type="SMART" id="SM00358">
    <property type="entry name" value="DSRM"/>
    <property type="match status" value="1"/>
</dbReference>
<dbReference type="SMART" id="SM00535">
    <property type="entry name" value="RIBOc"/>
    <property type="match status" value="1"/>
</dbReference>
<dbReference type="SUPFAM" id="SSF54768">
    <property type="entry name" value="dsRNA-binding domain-like"/>
    <property type="match status" value="1"/>
</dbReference>
<dbReference type="SUPFAM" id="SSF69065">
    <property type="entry name" value="RNase III domain-like"/>
    <property type="match status" value="1"/>
</dbReference>
<dbReference type="PROSITE" id="PS50137">
    <property type="entry name" value="DS_RBD"/>
    <property type="match status" value="1"/>
</dbReference>
<dbReference type="PROSITE" id="PS00517">
    <property type="entry name" value="RNASE_3_1"/>
    <property type="match status" value="1"/>
</dbReference>
<dbReference type="PROSITE" id="PS50142">
    <property type="entry name" value="RNASE_3_2"/>
    <property type="match status" value="1"/>
</dbReference>
<feature type="chain" id="PRO_0000180374" description="Ribonuclease 3">
    <location>
        <begin position="1"/>
        <end position="263"/>
    </location>
</feature>
<feature type="domain" description="RNase III" evidence="1">
    <location>
        <begin position="35"/>
        <end position="164"/>
    </location>
</feature>
<feature type="domain" description="DRBM" evidence="1">
    <location>
        <begin position="190"/>
        <end position="259"/>
    </location>
</feature>
<feature type="region of interest" description="Disordered" evidence="2">
    <location>
        <begin position="1"/>
        <end position="23"/>
    </location>
</feature>
<feature type="active site" evidence="1">
    <location>
        <position position="81"/>
    </location>
</feature>
<feature type="active site" evidence="1">
    <location>
        <position position="153"/>
    </location>
</feature>
<feature type="binding site" evidence="1">
    <location>
        <position position="77"/>
    </location>
    <ligand>
        <name>Mg(2+)</name>
        <dbReference type="ChEBI" id="CHEBI:18420"/>
    </ligand>
</feature>
<feature type="binding site" evidence="1">
    <location>
        <position position="150"/>
    </location>
    <ligand>
        <name>Mg(2+)</name>
        <dbReference type="ChEBI" id="CHEBI:18420"/>
    </ligand>
</feature>
<feature type="binding site" evidence="1">
    <location>
        <position position="153"/>
    </location>
    <ligand>
        <name>Mg(2+)</name>
        <dbReference type="ChEBI" id="CHEBI:18420"/>
    </ligand>
</feature>
<keyword id="KW-0963">Cytoplasm</keyword>
<keyword id="KW-0255">Endonuclease</keyword>
<keyword id="KW-0378">Hydrolase</keyword>
<keyword id="KW-0460">Magnesium</keyword>
<keyword id="KW-0479">Metal-binding</keyword>
<keyword id="KW-0507">mRNA processing</keyword>
<keyword id="KW-0540">Nuclease</keyword>
<keyword id="KW-1185">Reference proteome</keyword>
<keyword id="KW-0694">RNA-binding</keyword>
<keyword id="KW-0698">rRNA processing</keyword>
<keyword id="KW-0699">rRNA-binding</keyword>
<keyword id="KW-0819">tRNA processing</keyword>
<proteinExistence type="inferred from homology"/>
<protein>
    <recommendedName>
        <fullName evidence="1">Ribonuclease 3</fullName>
        <ecNumber evidence="1">3.1.26.3</ecNumber>
    </recommendedName>
    <alternativeName>
        <fullName evidence="1">Ribonuclease III</fullName>
        <shortName evidence="1">RNase III</shortName>
    </alternativeName>
</protein>
<reference key="1">
    <citation type="journal article" date="2000" name="Nucleic Acids Res.">
        <title>Complete genome sequence of the alkaliphilic bacterium Bacillus halodurans and genomic sequence comparison with Bacillus subtilis.</title>
        <authorList>
            <person name="Takami H."/>
            <person name="Nakasone K."/>
            <person name="Takaki Y."/>
            <person name="Maeno G."/>
            <person name="Sasaki R."/>
            <person name="Masui N."/>
            <person name="Fuji F."/>
            <person name="Hirama C."/>
            <person name="Nakamura Y."/>
            <person name="Ogasawara N."/>
            <person name="Kuhara S."/>
            <person name="Horikoshi K."/>
        </authorList>
    </citation>
    <scope>NUCLEOTIDE SEQUENCE [LARGE SCALE GENOMIC DNA]</scope>
    <source>
        <strain>ATCC BAA-125 / DSM 18197 / FERM 7344 / JCM 9153 / C-125</strain>
    </source>
</reference>
<gene>
    <name evidence="1" type="primary">rnc</name>
    <name type="synonym">rncS</name>
    <name type="ordered locus">BH2489</name>
</gene>
<sequence>MPHSKNQRKHRHHSHSERRRQPKRLTLTAKQQQMFDELLRTLNLTFANKKLLVQAFTHSSYVNEHRIQSCKDNERLEFLGDAVLELAVSQYLYKAFEQMSEGDMTKLRASIVCEPSLAQLAEELHFGELVLLGKGEEMTGGRKRPALLADVFESFVGALYLDQGMDAVYLFLERTIYPKISEGAFSHMMDFKSQLQEFIQRDNLGHIHYEIVQERGPAHNREFVSEVVLNNETLGVGTGRSKKEAEQHAAQQALITLSQKKEQ</sequence>
<comment type="function">
    <text evidence="1">Digests double-stranded RNA. Involved in the processing of primary rRNA transcript to yield the immediate precursors to the large and small rRNAs (23S and 16S). Processes some mRNAs, and tRNAs when they are encoded in the rRNA operon. Processes pre-crRNA and tracrRNA of type II CRISPR loci if present in the organism.</text>
</comment>
<comment type="catalytic activity">
    <reaction evidence="1">
        <text>Endonucleolytic cleavage to 5'-phosphomonoester.</text>
        <dbReference type="EC" id="3.1.26.3"/>
    </reaction>
</comment>
<comment type="cofactor">
    <cofactor evidence="1">
        <name>Mg(2+)</name>
        <dbReference type="ChEBI" id="CHEBI:18420"/>
    </cofactor>
</comment>
<comment type="subunit">
    <text evidence="1">Homodimer.</text>
</comment>
<comment type="subcellular location">
    <subcellularLocation>
        <location evidence="1">Cytoplasm</location>
    </subcellularLocation>
</comment>
<comment type="similarity">
    <text evidence="1">Belongs to the ribonuclease III family.</text>
</comment>
<accession>Q9KA05</accession>
<evidence type="ECO:0000255" key="1">
    <source>
        <dbReference type="HAMAP-Rule" id="MF_00104"/>
    </source>
</evidence>
<evidence type="ECO:0000256" key="2">
    <source>
        <dbReference type="SAM" id="MobiDB-lite"/>
    </source>
</evidence>